<feature type="chain" id="PRO_0000093145" description="L-cystine import ATP-binding protein TcyN">
    <location>
        <begin position="1"/>
        <end position="259"/>
    </location>
</feature>
<feature type="domain" description="ABC transporter" evidence="2">
    <location>
        <begin position="2"/>
        <end position="239"/>
    </location>
</feature>
<feature type="binding site" evidence="2">
    <location>
        <begin position="34"/>
        <end position="41"/>
    </location>
    <ligand>
        <name>ATP</name>
        <dbReference type="ChEBI" id="CHEBI:30616"/>
    </ligand>
</feature>
<accession>O34900</accession>
<evidence type="ECO:0000250" key="1"/>
<evidence type="ECO:0000255" key="2">
    <source>
        <dbReference type="PROSITE-ProRule" id="PRU00434"/>
    </source>
</evidence>
<evidence type="ECO:0000269" key="3">
    <source>
    </source>
</evidence>
<evidence type="ECO:0000269" key="4">
    <source>
    </source>
</evidence>
<evidence type="ECO:0000305" key="5"/>
<sequence>MIEIKNIHKQFGIHHVLKGINLTVRKGEVVTIIGPSGSGKTTFLRCLNLLERPDEGIISIHDKVINCRFPSKKEVHWLRKQTAMVFQQYHLFAHKTVIENVMEGLTIARKMRKQDAYAVAENELRKVGLQDKLNAYPSQLSGGQKQRVGIARALAIHPDVLLFDEPTAALDPELVGEVLEVMLEIVKTGATMIVVTHEMEFARRVSDQVVFMDEGVIVEQGTPEEVFRHTKKDRTRQFLRRVSPEYLFEPKEHIKEPVI</sequence>
<gene>
    <name type="primary">tcyN</name>
    <name type="synonym">ytmN</name>
    <name type="ordered locus">BSU29340</name>
</gene>
<keyword id="KW-0029">Amino-acid transport</keyword>
<keyword id="KW-0067">ATP-binding</keyword>
<keyword id="KW-1003">Cell membrane</keyword>
<keyword id="KW-0472">Membrane</keyword>
<keyword id="KW-0547">Nucleotide-binding</keyword>
<keyword id="KW-1185">Reference proteome</keyword>
<keyword id="KW-1278">Translocase</keyword>
<keyword id="KW-0813">Transport</keyword>
<protein>
    <recommendedName>
        <fullName>L-cystine import ATP-binding protein TcyN</fullName>
        <ecNumber>7.4.2.-</ecNumber>
    </recommendedName>
</protein>
<organism>
    <name type="scientific">Bacillus subtilis (strain 168)</name>
    <dbReference type="NCBI Taxonomy" id="224308"/>
    <lineage>
        <taxon>Bacteria</taxon>
        <taxon>Bacillati</taxon>
        <taxon>Bacillota</taxon>
        <taxon>Bacilli</taxon>
        <taxon>Bacillales</taxon>
        <taxon>Bacillaceae</taxon>
        <taxon>Bacillus</taxon>
    </lineage>
</organism>
<comment type="function">
    <text evidence="4 5">Part of the ABC transporter complex TcyJKLMN involved in L-cystine import. Responsible for energy coupling to the transport system (Probable). Is also involved in cystathionine, djenkolate, and S-methylcysteine transport.</text>
</comment>
<comment type="subunit">
    <text evidence="5">The complex is composed of two ATP-binding proteins (TcyN), two transmembrane proteins (TcyL and TcyM) and two solute-binding proteins (TcyJ and TcyK).</text>
</comment>
<comment type="subcellular location">
    <subcellularLocation>
        <location evidence="1">Cell membrane</location>
        <topology evidence="1">Peripheral membrane protein</topology>
    </subcellularLocation>
</comment>
<comment type="induction">
    <text evidence="3">More strongly expressed in the presence of methionine than in the presence of sulfate.</text>
</comment>
<comment type="similarity">
    <text evidence="5">Belongs to the ABC transporter superfamily. L-cystine importer (TC 3.A.1.3.13) family.</text>
</comment>
<proteinExistence type="evidence at protein level"/>
<reference key="1">
    <citation type="journal article" date="1997" name="Microbiology">
        <title>Sequencing and functional annotation of the Bacillus subtilis genes in the 200 kb rrnB-dnaB region.</title>
        <authorList>
            <person name="Lapidus A."/>
            <person name="Galleron N."/>
            <person name="Sorokin A."/>
            <person name="Ehrlich S.D."/>
        </authorList>
    </citation>
    <scope>NUCLEOTIDE SEQUENCE [GENOMIC DNA]</scope>
    <source>
        <strain>168</strain>
    </source>
</reference>
<reference key="2">
    <citation type="journal article" date="1997" name="Nature">
        <title>The complete genome sequence of the Gram-positive bacterium Bacillus subtilis.</title>
        <authorList>
            <person name="Kunst F."/>
            <person name="Ogasawara N."/>
            <person name="Moszer I."/>
            <person name="Albertini A.M."/>
            <person name="Alloni G."/>
            <person name="Azevedo V."/>
            <person name="Bertero M.G."/>
            <person name="Bessieres P."/>
            <person name="Bolotin A."/>
            <person name="Borchert S."/>
            <person name="Borriss R."/>
            <person name="Boursier L."/>
            <person name="Brans A."/>
            <person name="Braun M."/>
            <person name="Brignell S.C."/>
            <person name="Bron S."/>
            <person name="Brouillet S."/>
            <person name="Bruschi C.V."/>
            <person name="Caldwell B."/>
            <person name="Capuano V."/>
            <person name="Carter N.M."/>
            <person name="Choi S.-K."/>
            <person name="Codani J.-J."/>
            <person name="Connerton I.F."/>
            <person name="Cummings N.J."/>
            <person name="Daniel R.A."/>
            <person name="Denizot F."/>
            <person name="Devine K.M."/>
            <person name="Duesterhoeft A."/>
            <person name="Ehrlich S.D."/>
            <person name="Emmerson P.T."/>
            <person name="Entian K.-D."/>
            <person name="Errington J."/>
            <person name="Fabret C."/>
            <person name="Ferrari E."/>
            <person name="Foulger D."/>
            <person name="Fritz C."/>
            <person name="Fujita M."/>
            <person name="Fujita Y."/>
            <person name="Fuma S."/>
            <person name="Galizzi A."/>
            <person name="Galleron N."/>
            <person name="Ghim S.-Y."/>
            <person name="Glaser P."/>
            <person name="Goffeau A."/>
            <person name="Golightly E.J."/>
            <person name="Grandi G."/>
            <person name="Guiseppi G."/>
            <person name="Guy B.J."/>
            <person name="Haga K."/>
            <person name="Haiech J."/>
            <person name="Harwood C.R."/>
            <person name="Henaut A."/>
            <person name="Hilbert H."/>
            <person name="Holsappel S."/>
            <person name="Hosono S."/>
            <person name="Hullo M.-F."/>
            <person name="Itaya M."/>
            <person name="Jones L.-M."/>
            <person name="Joris B."/>
            <person name="Karamata D."/>
            <person name="Kasahara Y."/>
            <person name="Klaerr-Blanchard M."/>
            <person name="Klein C."/>
            <person name="Kobayashi Y."/>
            <person name="Koetter P."/>
            <person name="Koningstein G."/>
            <person name="Krogh S."/>
            <person name="Kumano M."/>
            <person name="Kurita K."/>
            <person name="Lapidus A."/>
            <person name="Lardinois S."/>
            <person name="Lauber J."/>
            <person name="Lazarevic V."/>
            <person name="Lee S.-M."/>
            <person name="Levine A."/>
            <person name="Liu H."/>
            <person name="Masuda S."/>
            <person name="Mauel C."/>
            <person name="Medigue C."/>
            <person name="Medina N."/>
            <person name="Mellado R.P."/>
            <person name="Mizuno M."/>
            <person name="Moestl D."/>
            <person name="Nakai S."/>
            <person name="Noback M."/>
            <person name="Noone D."/>
            <person name="O'Reilly M."/>
            <person name="Ogawa K."/>
            <person name="Ogiwara A."/>
            <person name="Oudega B."/>
            <person name="Park S.-H."/>
            <person name="Parro V."/>
            <person name="Pohl T.M."/>
            <person name="Portetelle D."/>
            <person name="Porwollik S."/>
            <person name="Prescott A.M."/>
            <person name="Presecan E."/>
            <person name="Pujic P."/>
            <person name="Purnelle B."/>
            <person name="Rapoport G."/>
            <person name="Rey M."/>
            <person name="Reynolds S."/>
            <person name="Rieger M."/>
            <person name="Rivolta C."/>
            <person name="Rocha E."/>
            <person name="Roche B."/>
            <person name="Rose M."/>
            <person name="Sadaie Y."/>
            <person name="Sato T."/>
            <person name="Scanlan E."/>
            <person name="Schleich S."/>
            <person name="Schroeter R."/>
            <person name="Scoffone F."/>
            <person name="Sekiguchi J."/>
            <person name="Sekowska A."/>
            <person name="Seror S.J."/>
            <person name="Serror P."/>
            <person name="Shin B.-S."/>
            <person name="Soldo B."/>
            <person name="Sorokin A."/>
            <person name="Tacconi E."/>
            <person name="Takagi T."/>
            <person name="Takahashi H."/>
            <person name="Takemaru K."/>
            <person name="Takeuchi M."/>
            <person name="Tamakoshi A."/>
            <person name="Tanaka T."/>
            <person name="Terpstra P."/>
            <person name="Tognoni A."/>
            <person name="Tosato V."/>
            <person name="Uchiyama S."/>
            <person name="Vandenbol M."/>
            <person name="Vannier F."/>
            <person name="Vassarotti A."/>
            <person name="Viari A."/>
            <person name="Wambutt R."/>
            <person name="Wedler E."/>
            <person name="Wedler H."/>
            <person name="Weitzenegger T."/>
            <person name="Winters P."/>
            <person name="Wipat A."/>
            <person name="Yamamoto H."/>
            <person name="Yamane K."/>
            <person name="Yasumoto K."/>
            <person name="Yata K."/>
            <person name="Yoshida K."/>
            <person name="Yoshikawa H.-F."/>
            <person name="Zumstein E."/>
            <person name="Yoshikawa H."/>
            <person name="Danchin A."/>
        </authorList>
    </citation>
    <scope>NUCLEOTIDE SEQUENCE [LARGE SCALE GENOMIC DNA]</scope>
    <source>
        <strain>168</strain>
    </source>
</reference>
<reference key="3">
    <citation type="journal article" date="2002" name="J. Bacteriol.">
        <title>Global expression profile of Bacillus subtilis grown in the presence of sulfate or methionine.</title>
        <authorList>
            <person name="Auger S."/>
            <person name="Danchin A."/>
            <person name="Martin-Verstraete I."/>
        </authorList>
    </citation>
    <scope>INDUCTION</scope>
    <source>
        <strain>168</strain>
    </source>
</reference>
<reference key="4">
    <citation type="journal article" date="2004" name="J. Bacteriol.">
        <title>Three different systems participate in L-cystine uptake in Bacillus subtilis.</title>
        <authorList>
            <person name="Burguiere P."/>
            <person name="Auger S."/>
            <person name="Hullo M.-F."/>
            <person name="Danchin A."/>
            <person name="Martin-Verstraete I."/>
        </authorList>
    </citation>
    <scope>FUNCTION IN L-CYSTINE TRANSPORT</scope>
    <source>
        <strain>168</strain>
    </source>
</reference>
<name>TCYN_BACSU</name>
<dbReference type="EC" id="7.4.2.-"/>
<dbReference type="EMBL" id="AF008220">
    <property type="protein sequence ID" value="AAC00329.1"/>
    <property type="molecule type" value="Genomic_DNA"/>
</dbReference>
<dbReference type="EMBL" id="AL009126">
    <property type="protein sequence ID" value="CAB14894.1"/>
    <property type="molecule type" value="Genomic_DNA"/>
</dbReference>
<dbReference type="PIR" id="F69641">
    <property type="entry name" value="F69641"/>
</dbReference>
<dbReference type="RefSeq" id="NP_390812.1">
    <property type="nucleotide sequence ID" value="NC_000964.3"/>
</dbReference>
<dbReference type="RefSeq" id="WP_004398701.1">
    <property type="nucleotide sequence ID" value="NZ_OZ025638.1"/>
</dbReference>
<dbReference type="SMR" id="O34900"/>
<dbReference type="FunCoup" id="O34900">
    <property type="interactions" value="473"/>
</dbReference>
<dbReference type="STRING" id="224308.BSU29340"/>
<dbReference type="TCDB" id="3.A.1.3.13">
    <property type="family name" value="the atp-binding cassette (abc) superfamily"/>
</dbReference>
<dbReference type="PaxDb" id="224308-BSU29340"/>
<dbReference type="EnsemblBacteria" id="CAB14894">
    <property type="protein sequence ID" value="CAB14894"/>
    <property type="gene ID" value="BSU_29340"/>
</dbReference>
<dbReference type="GeneID" id="937364"/>
<dbReference type="KEGG" id="bsu:BSU29340"/>
<dbReference type="PATRIC" id="fig|224308.179.peg.3188"/>
<dbReference type="eggNOG" id="COG1126">
    <property type="taxonomic scope" value="Bacteria"/>
</dbReference>
<dbReference type="InParanoid" id="O34900"/>
<dbReference type="OrthoDB" id="9802185at2"/>
<dbReference type="PhylomeDB" id="O34900"/>
<dbReference type="BioCyc" id="BSUB:BSU29340-MONOMER"/>
<dbReference type="SABIO-RK" id="O34900"/>
<dbReference type="Proteomes" id="UP000001570">
    <property type="component" value="Chromosome"/>
</dbReference>
<dbReference type="GO" id="GO:0005886">
    <property type="term" value="C:plasma membrane"/>
    <property type="evidence" value="ECO:0007669"/>
    <property type="project" value="UniProtKB-SubCell"/>
</dbReference>
<dbReference type="GO" id="GO:0015424">
    <property type="term" value="F:ABC-type amino acid transporter activity"/>
    <property type="evidence" value="ECO:0007669"/>
    <property type="project" value="InterPro"/>
</dbReference>
<dbReference type="GO" id="GO:0005524">
    <property type="term" value="F:ATP binding"/>
    <property type="evidence" value="ECO:0007669"/>
    <property type="project" value="UniProtKB-KW"/>
</dbReference>
<dbReference type="GO" id="GO:0016887">
    <property type="term" value="F:ATP hydrolysis activity"/>
    <property type="evidence" value="ECO:0007669"/>
    <property type="project" value="InterPro"/>
</dbReference>
<dbReference type="CDD" id="cd03262">
    <property type="entry name" value="ABC_HisP_GlnQ"/>
    <property type="match status" value="1"/>
</dbReference>
<dbReference type="FunFam" id="3.40.50.300:FF:000020">
    <property type="entry name" value="Amino acid ABC transporter ATP-binding component"/>
    <property type="match status" value="1"/>
</dbReference>
<dbReference type="Gene3D" id="3.40.50.300">
    <property type="entry name" value="P-loop containing nucleotide triphosphate hydrolases"/>
    <property type="match status" value="1"/>
</dbReference>
<dbReference type="InterPro" id="IPR003593">
    <property type="entry name" value="AAA+_ATPase"/>
</dbReference>
<dbReference type="InterPro" id="IPR030679">
    <property type="entry name" value="ABC_ATPase_HisP-typ"/>
</dbReference>
<dbReference type="InterPro" id="IPR003439">
    <property type="entry name" value="ABC_transporter-like_ATP-bd"/>
</dbReference>
<dbReference type="InterPro" id="IPR017871">
    <property type="entry name" value="ABC_transporter-like_CS"/>
</dbReference>
<dbReference type="InterPro" id="IPR050086">
    <property type="entry name" value="MetN_ABC_transporter-like"/>
</dbReference>
<dbReference type="InterPro" id="IPR027417">
    <property type="entry name" value="P-loop_NTPase"/>
</dbReference>
<dbReference type="PANTHER" id="PTHR43166">
    <property type="entry name" value="AMINO ACID IMPORT ATP-BINDING PROTEIN"/>
    <property type="match status" value="1"/>
</dbReference>
<dbReference type="PANTHER" id="PTHR43166:SF35">
    <property type="entry name" value="L-CYSTINE IMPORT ATP-BINDING PROTEIN TCYN"/>
    <property type="match status" value="1"/>
</dbReference>
<dbReference type="Pfam" id="PF00005">
    <property type="entry name" value="ABC_tran"/>
    <property type="match status" value="1"/>
</dbReference>
<dbReference type="PIRSF" id="PIRSF039085">
    <property type="entry name" value="ABC_ATPase_HisP"/>
    <property type="match status" value="1"/>
</dbReference>
<dbReference type="SMART" id="SM00382">
    <property type="entry name" value="AAA"/>
    <property type="match status" value="1"/>
</dbReference>
<dbReference type="SUPFAM" id="SSF52540">
    <property type="entry name" value="P-loop containing nucleoside triphosphate hydrolases"/>
    <property type="match status" value="1"/>
</dbReference>
<dbReference type="PROSITE" id="PS00211">
    <property type="entry name" value="ABC_TRANSPORTER_1"/>
    <property type="match status" value="1"/>
</dbReference>
<dbReference type="PROSITE" id="PS50893">
    <property type="entry name" value="ABC_TRANSPORTER_2"/>
    <property type="match status" value="1"/>
</dbReference>